<protein>
    <recommendedName>
        <fullName evidence="1">DNA gyrase subunit A</fullName>
        <ecNumber evidence="1">5.6.2.2</ecNumber>
    </recommendedName>
</protein>
<dbReference type="EC" id="5.6.2.2" evidence="1"/>
<dbReference type="EMBL" id="CP000777">
    <property type="protein sequence ID" value="ABZ92556.1"/>
    <property type="molecule type" value="Genomic_DNA"/>
</dbReference>
<dbReference type="RefSeq" id="WP_012387044.1">
    <property type="nucleotide sequence ID" value="NC_010842.1"/>
</dbReference>
<dbReference type="SMR" id="B0S912"/>
<dbReference type="KEGG" id="lbf:LBF_0009"/>
<dbReference type="HOGENOM" id="CLU_002977_6_1_12"/>
<dbReference type="GO" id="GO:0005694">
    <property type="term" value="C:chromosome"/>
    <property type="evidence" value="ECO:0007669"/>
    <property type="project" value="InterPro"/>
</dbReference>
<dbReference type="GO" id="GO:0005737">
    <property type="term" value="C:cytoplasm"/>
    <property type="evidence" value="ECO:0007669"/>
    <property type="project" value="UniProtKB-SubCell"/>
</dbReference>
<dbReference type="GO" id="GO:0009330">
    <property type="term" value="C:DNA topoisomerase type II (double strand cut, ATP-hydrolyzing) complex"/>
    <property type="evidence" value="ECO:0007669"/>
    <property type="project" value="TreeGrafter"/>
</dbReference>
<dbReference type="GO" id="GO:0005524">
    <property type="term" value="F:ATP binding"/>
    <property type="evidence" value="ECO:0007669"/>
    <property type="project" value="UniProtKB-UniRule"/>
</dbReference>
<dbReference type="GO" id="GO:0003677">
    <property type="term" value="F:DNA binding"/>
    <property type="evidence" value="ECO:0007669"/>
    <property type="project" value="UniProtKB-UniRule"/>
</dbReference>
<dbReference type="GO" id="GO:0034335">
    <property type="term" value="F:DNA negative supercoiling activity"/>
    <property type="evidence" value="ECO:0007669"/>
    <property type="project" value="UniProtKB-ARBA"/>
</dbReference>
<dbReference type="GO" id="GO:0006265">
    <property type="term" value="P:DNA topological change"/>
    <property type="evidence" value="ECO:0007669"/>
    <property type="project" value="UniProtKB-UniRule"/>
</dbReference>
<dbReference type="GO" id="GO:0006261">
    <property type="term" value="P:DNA-templated DNA replication"/>
    <property type="evidence" value="ECO:0007669"/>
    <property type="project" value="UniProtKB-UniRule"/>
</dbReference>
<dbReference type="CDD" id="cd00187">
    <property type="entry name" value="TOP4c"/>
    <property type="match status" value="1"/>
</dbReference>
<dbReference type="FunFam" id="1.10.268.10:FF:000001">
    <property type="entry name" value="DNA gyrase subunit A"/>
    <property type="match status" value="1"/>
</dbReference>
<dbReference type="FunFam" id="3.30.1360.40:FF:000002">
    <property type="entry name" value="DNA gyrase subunit A"/>
    <property type="match status" value="1"/>
</dbReference>
<dbReference type="FunFam" id="3.90.199.10:FF:000001">
    <property type="entry name" value="DNA gyrase subunit A"/>
    <property type="match status" value="1"/>
</dbReference>
<dbReference type="FunFam" id="2.120.10.90:FF:000005">
    <property type="entry name" value="DNA topoisomerase 4 subunit A"/>
    <property type="match status" value="1"/>
</dbReference>
<dbReference type="Gene3D" id="3.30.1360.40">
    <property type="match status" value="1"/>
</dbReference>
<dbReference type="Gene3D" id="2.120.10.90">
    <property type="entry name" value="DNA gyrase/topoisomerase IV, subunit A, C-terminal"/>
    <property type="match status" value="1"/>
</dbReference>
<dbReference type="Gene3D" id="3.90.199.10">
    <property type="entry name" value="Topoisomerase II, domain 5"/>
    <property type="match status" value="1"/>
</dbReference>
<dbReference type="Gene3D" id="1.10.268.10">
    <property type="entry name" value="Topoisomerase, domain 3"/>
    <property type="match status" value="1"/>
</dbReference>
<dbReference type="HAMAP" id="MF_01897">
    <property type="entry name" value="GyrA"/>
    <property type="match status" value="1"/>
</dbReference>
<dbReference type="InterPro" id="IPR005743">
    <property type="entry name" value="GyrA"/>
</dbReference>
<dbReference type="InterPro" id="IPR006691">
    <property type="entry name" value="GyrA/parC_rep"/>
</dbReference>
<dbReference type="InterPro" id="IPR035516">
    <property type="entry name" value="Gyrase/topoIV_suA_C"/>
</dbReference>
<dbReference type="InterPro" id="IPR013760">
    <property type="entry name" value="Topo_IIA-like_dom_sf"/>
</dbReference>
<dbReference type="InterPro" id="IPR013758">
    <property type="entry name" value="Topo_IIA_A/C_ab"/>
</dbReference>
<dbReference type="InterPro" id="IPR013757">
    <property type="entry name" value="Topo_IIA_A_a_sf"/>
</dbReference>
<dbReference type="InterPro" id="IPR002205">
    <property type="entry name" value="Topo_IIA_dom_A"/>
</dbReference>
<dbReference type="InterPro" id="IPR050220">
    <property type="entry name" value="Type_II_DNA_Topoisomerases"/>
</dbReference>
<dbReference type="NCBIfam" id="TIGR01063">
    <property type="entry name" value="gyrA"/>
    <property type="match status" value="1"/>
</dbReference>
<dbReference type="NCBIfam" id="NF004043">
    <property type="entry name" value="PRK05560.1"/>
    <property type="match status" value="1"/>
</dbReference>
<dbReference type="NCBIfam" id="NF004044">
    <property type="entry name" value="PRK05561.1"/>
    <property type="match status" value="1"/>
</dbReference>
<dbReference type="PANTHER" id="PTHR43493:SF5">
    <property type="entry name" value="DNA GYRASE SUBUNIT A, CHLOROPLASTIC_MITOCHONDRIAL"/>
    <property type="match status" value="1"/>
</dbReference>
<dbReference type="PANTHER" id="PTHR43493">
    <property type="entry name" value="DNA GYRASE/TOPOISOMERASE SUBUNIT A"/>
    <property type="match status" value="1"/>
</dbReference>
<dbReference type="Pfam" id="PF03989">
    <property type="entry name" value="DNA_gyraseA_C"/>
    <property type="match status" value="6"/>
</dbReference>
<dbReference type="Pfam" id="PF00521">
    <property type="entry name" value="DNA_topoisoIV"/>
    <property type="match status" value="1"/>
</dbReference>
<dbReference type="SMART" id="SM00434">
    <property type="entry name" value="TOP4c"/>
    <property type="match status" value="1"/>
</dbReference>
<dbReference type="SUPFAM" id="SSF101904">
    <property type="entry name" value="GyrA/ParC C-terminal domain-like"/>
    <property type="match status" value="1"/>
</dbReference>
<dbReference type="SUPFAM" id="SSF56719">
    <property type="entry name" value="Type II DNA topoisomerase"/>
    <property type="match status" value="1"/>
</dbReference>
<dbReference type="PROSITE" id="PS52040">
    <property type="entry name" value="TOPO_IIA"/>
    <property type="match status" value="1"/>
</dbReference>
<comment type="function">
    <text evidence="1">A type II topoisomerase that negatively supercoils closed circular double-stranded (ds) DNA in an ATP-dependent manner to modulate DNA topology and maintain chromosomes in an underwound state. Negative supercoiling favors strand separation, and DNA replication, transcription, recombination and repair, all of which involve strand separation. Also able to catalyze the interconversion of other topological isomers of dsDNA rings, including catenanes and knotted rings. Type II topoisomerases break and join 2 DNA strands simultaneously in an ATP-dependent manner.</text>
</comment>
<comment type="catalytic activity">
    <reaction evidence="1">
        <text>ATP-dependent breakage, passage and rejoining of double-stranded DNA.</text>
        <dbReference type="EC" id="5.6.2.2"/>
    </reaction>
</comment>
<comment type="subunit">
    <text evidence="1">Heterotetramer, composed of two GyrA and two GyrB chains. In the heterotetramer, GyrA contains the active site tyrosine that forms a transient covalent intermediate with DNA, while GyrB binds cofactors and catalyzes ATP hydrolysis.</text>
</comment>
<comment type="subcellular location">
    <subcellularLocation>
        <location evidence="1">Cytoplasm</location>
    </subcellularLocation>
</comment>
<comment type="miscellaneous">
    <text evidence="1">Few gyrases are as efficient as E.coli at forming negative supercoils. Not all organisms have 2 type II topoisomerases; in organisms with a single type II topoisomerase this enzyme also has to decatenate newly replicated chromosomes.</text>
</comment>
<comment type="similarity">
    <text evidence="1">Belongs to the type II topoisomerase GyrA/ParC subunit family.</text>
</comment>
<keyword id="KW-0067">ATP-binding</keyword>
<keyword id="KW-0963">Cytoplasm</keyword>
<keyword id="KW-0238">DNA-binding</keyword>
<keyword id="KW-0413">Isomerase</keyword>
<keyword id="KW-0547">Nucleotide-binding</keyword>
<keyword id="KW-0799">Topoisomerase</keyword>
<feature type="chain" id="PRO_0000409828" description="DNA gyrase subunit A">
    <location>
        <begin position="1"/>
        <end position="843"/>
    </location>
</feature>
<feature type="domain" description="Topo IIA-type catalytic" evidence="2">
    <location>
        <begin position="61"/>
        <end position="528"/>
    </location>
</feature>
<feature type="short sequence motif" description="GyrA-box" evidence="1">
    <location>
        <begin position="555"/>
        <end position="561"/>
    </location>
</feature>
<feature type="active site" description="O-(5'-phospho-DNA)-tyrosine intermediate" evidence="1">
    <location>
        <position position="149"/>
    </location>
</feature>
<evidence type="ECO:0000255" key="1">
    <source>
        <dbReference type="HAMAP-Rule" id="MF_01897"/>
    </source>
</evidence>
<evidence type="ECO:0000255" key="2">
    <source>
        <dbReference type="PROSITE-ProRule" id="PRU01384"/>
    </source>
</evidence>
<gene>
    <name evidence="1" type="primary">gyrA</name>
    <name type="ordered locus">LBF_0009</name>
</gene>
<accession>B0S912</accession>
<name>GYRA_LEPBA</name>
<organism>
    <name type="scientific">Leptospira biflexa serovar Patoc (strain Patoc 1 / Ames)</name>
    <dbReference type="NCBI Taxonomy" id="355278"/>
    <lineage>
        <taxon>Bacteria</taxon>
        <taxon>Pseudomonadati</taxon>
        <taxon>Spirochaetota</taxon>
        <taxon>Spirochaetia</taxon>
        <taxon>Leptospirales</taxon>
        <taxon>Leptospiraceae</taxon>
        <taxon>Leptospira</taxon>
    </lineage>
</organism>
<sequence length="843" mass="93818">MTEQNGQENESNKTLALNLSGRPDVAGALKAGVRVIPVEIEDQMKEAYLDYAMSVIVGRALPDVRDGLKPVHRRVLHAMNERAWRSDRPYVKSAKIVGEVIGNYHPHGDSAVYETMVRMAQTFSMRETLIDGQGNFGSVDGDNAAAYRYTEARLTKLAEELLKDIEKNTVSFSPNFDDTRQQPDVLPANFPNILVNGSTGIAVGMATNIPPHNLKEAVNAVIALIQNPDITLPELMKILPGPDFPTGGTIIGGEGLYQAYATGKGSIRIRSKVDIIENNKGREIIVIHEIPYQVNKKNMLEKIGDLVNEKIIEGISEILDLSDRKGIRVEIHVKKDANAQVILNQLFKLTQLQVSYGITMLAILDNRPKIFSLKEILKSYAEHRREVVVKRTEFDLDKAQKRAHILEGLRIALENIDEVIRIIRASKDVREAQSSLMATFSLSELQADAILEMRLQRLTSLEVQKIIDELEQVRILIADLEDILSKPDRVKSIICDELGKVSQSFGNTRTTEISLESLESSTFNAEDLIADEEVVVQLSEDMFIKRLPMDTFRRQKRGGKGVQGISTKREDFVKKLSSAMTHDNLMLFSNKGRAFLLKVYELPIATKEARGKSLKAVINLNDDEIITSLFTFRNFDESYLLMVTREGFVKKIQLDEFTNTKKSGIIAIGLRDGDELIDVIANPNNYDVFIGSKNGLAIRMNLNELRSQGRTASGVTAMKLEDDDSIAGITKVEPNTNLFCISENGFGKRTDFEEFSTKGRGGKGMTYLKIGEKNGRAVGISSVKEEDELLVITQSGMAIRVEVKTISMVGRSAMGVKVVNTKDEDFVKDFAVVRESDSDSAES</sequence>
<reference key="1">
    <citation type="journal article" date="2008" name="PLoS ONE">
        <title>Genome sequence of the saprophyte Leptospira biflexa provides insights into the evolution of Leptospira and the pathogenesis of leptospirosis.</title>
        <authorList>
            <person name="Picardeau M."/>
            <person name="Bulach D.M."/>
            <person name="Bouchier C."/>
            <person name="Zuerner R.L."/>
            <person name="Zidane N."/>
            <person name="Wilson P.J."/>
            <person name="Creno S."/>
            <person name="Kuczek E.S."/>
            <person name="Bommezzadri S."/>
            <person name="Davis J.C."/>
            <person name="McGrath A."/>
            <person name="Johnson M.J."/>
            <person name="Boursaux-Eude C."/>
            <person name="Seemann T."/>
            <person name="Rouy Z."/>
            <person name="Coppel R.L."/>
            <person name="Rood J.I."/>
            <person name="Lajus A."/>
            <person name="Davies J.K."/>
            <person name="Medigue C."/>
            <person name="Adler B."/>
        </authorList>
    </citation>
    <scope>NUCLEOTIDE SEQUENCE [LARGE SCALE GENOMIC DNA]</scope>
    <source>
        <strain>Patoc 1 / Ames</strain>
    </source>
</reference>
<proteinExistence type="inferred from homology"/>